<feature type="chain" id="PRO_1000011954" description="Diaminopimelate epimerase">
    <location>
        <begin position="1"/>
        <end position="269"/>
    </location>
</feature>
<feature type="active site" description="Proton donor" evidence="1">
    <location>
        <position position="75"/>
    </location>
</feature>
<feature type="active site" description="Proton acceptor" evidence="1">
    <location>
        <position position="213"/>
    </location>
</feature>
<feature type="binding site" evidence="1">
    <location>
        <position position="15"/>
    </location>
    <ligand>
        <name>substrate</name>
    </ligand>
</feature>
<feature type="binding site" evidence="1">
    <location>
        <position position="49"/>
    </location>
    <ligand>
        <name>substrate</name>
    </ligand>
</feature>
<feature type="binding site" evidence="1">
    <location>
        <position position="66"/>
    </location>
    <ligand>
        <name>substrate</name>
    </ligand>
</feature>
<feature type="binding site" evidence="1">
    <location>
        <begin position="76"/>
        <end position="77"/>
    </location>
    <ligand>
        <name>substrate</name>
    </ligand>
</feature>
<feature type="binding site" evidence="1">
    <location>
        <position position="155"/>
    </location>
    <ligand>
        <name>substrate</name>
    </ligand>
</feature>
<feature type="binding site" evidence="1">
    <location>
        <position position="187"/>
    </location>
    <ligand>
        <name>substrate</name>
    </ligand>
</feature>
<feature type="binding site" evidence="1">
    <location>
        <begin position="204"/>
        <end position="205"/>
    </location>
    <ligand>
        <name>substrate</name>
    </ligand>
</feature>
<feature type="binding site" evidence="1">
    <location>
        <begin position="214"/>
        <end position="215"/>
    </location>
    <ligand>
        <name>substrate</name>
    </ligand>
</feature>
<feature type="site" description="Could be important to modulate the pK values of the two catalytic cysteine residues" evidence="1">
    <location>
        <position position="157"/>
    </location>
</feature>
<feature type="site" description="Could be important to modulate the pK values of the two catalytic cysteine residues" evidence="1">
    <location>
        <position position="204"/>
    </location>
</feature>
<proteinExistence type="inferred from homology"/>
<evidence type="ECO:0000255" key="1">
    <source>
        <dbReference type="HAMAP-Rule" id="MF_00197"/>
    </source>
</evidence>
<comment type="function">
    <text evidence="1">Catalyzes the stereoinversion of LL-2,6-diaminopimelate (L,L-DAP) to meso-diaminopimelate (meso-DAP), a precursor of L-lysine and an essential component of the bacterial peptidoglycan.</text>
</comment>
<comment type="catalytic activity">
    <reaction evidence="1">
        <text>(2S,6S)-2,6-diaminopimelate = meso-2,6-diaminopimelate</text>
        <dbReference type="Rhea" id="RHEA:15393"/>
        <dbReference type="ChEBI" id="CHEBI:57609"/>
        <dbReference type="ChEBI" id="CHEBI:57791"/>
        <dbReference type="EC" id="5.1.1.7"/>
    </reaction>
</comment>
<comment type="pathway">
    <text evidence="1">Amino-acid biosynthesis; L-lysine biosynthesis via DAP pathway; DL-2,6-diaminopimelate from LL-2,6-diaminopimelate: step 1/1.</text>
</comment>
<comment type="subunit">
    <text evidence="1">Homodimer.</text>
</comment>
<comment type="subcellular location">
    <subcellularLocation>
        <location evidence="1">Cytoplasm</location>
    </subcellularLocation>
</comment>
<comment type="similarity">
    <text evidence="1">Belongs to the diaminopimelate epimerase family.</text>
</comment>
<gene>
    <name evidence="1" type="primary">dapF</name>
    <name type="ordered locus">A1E_03280</name>
</gene>
<sequence>MISKINFVKMHGLGNDCVIVNKRDLLNAHNLSQLAKNIADRHTGIGCDQFIIYENHNNFYEMIIYNIDGSSAKLCGNATRCLAKLIYLDTGKKDITIVVGNKELLCRIEDENKISVNVGAVSFNETWMPSRDKIWAFAARYMIDLKETICVDVGNPHLVIFSKLESQDQKIVGETLQAKELFANGVNVNFAEIKDNKINLSVWERGVGLTGACGSGACGSFAAGLKRGFIHSPSTVVFKHGSLNMKEENGNIIMQGSATLIAEGVYCCE</sequence>
<name>DAPF_RICCK</name>
<protein>
    <recommendedName>
        <fullName evidence="1">Diaminopimelate epimerase</fullName>
        <shortName evidence="1">DAP epimerase</shortName>
        <ecNumber evidence="1">5.1.1.7</ecNumber>
    </recommendedName>
    <alternativeName>
        <fullName evidence="1">PLP-independent amino acid racemase</fullName>
    </alternativeName>
</protein>
<organism>
    <name type="scientific">Rickettsia canadensis (strain McKiel)</name>
    <dbReference type="NCBI Taxonomy" id="293613"/>
    <lineage>
        <taxon>Bacteria</taxon>
        <taxon>Pseudomonadati</taxon>
        <taxon>Pseudomonadota</taxon>
        <taxon>Alphaproteobacteria</taxon>
        <taxon>Rickettsiales</taxon>
        <taxon>Rickettsiaceae</taxon>
        <taxon>Rickettsieae</taxon>
        <taxon>Rickettsia</taxon>
        <taxon>belli group</taxon>
    </lineage>
</organism>
<keyword id="KW-0028">Amino-acid biosynthesis</keyword>
<keyword id="KW-0963">Cytoplasm</keyword>
<keyword id="KW-0413">Isomerase</keyword>
<keyword id="KW-0457">Lysine biosynthesis</keyword>
<reference key="1">
    <citation type="submission" date="2007-09" db="EMBL/GenBank/DDBJ databases">
        <title>Complete genome sequence of Rickettsia canadensis.</title>
        <authorList>
            <person name="Madan A."/>
            <person name="Fahey J."/>
            <person name="Helton E."/>
            <person name="Ketteman M."/>
            <person name="Madan A."/>
            <person name="Rodrigues S."/>
            <person name="Sanchez A."/>
            <person name="Whiting M."/>
            <person name="Dasch G."/>
            <person name="Eremeeva M."/>
        </authorList>
    </citation>
    <scope>NUCLEOTIDE SEQUENCE [LARGE SCALE GENOMIC DNA]</scope>
    <source>
        <strain>McKiel</strain>
    </source>
</reference>
<dbReference type="EC" id="5.1.1.7" evidence="1"/>
<dbReference type="EMBL" id="CP000409">
    <property type="protein sequence ID" value="ABV73591.1"/>
    <property type="molecule type" value="Genomic_DNA"/>
</dbReference>
<dbReference type="RefSeq" id="WP_012148787.1">
    <property type="nucleotide sequence ID" value="NC_009879.1"/>
</dbReference>
<dbReference type="SMR" id="A8EZ08"/>
<dbReference type="STRING" id="293613.A1E_03280"/>
<dbReference type="KEGG" id="rcm:A1E_03280"/>
<dbReference type="eggNOG" id="COG0253">
    <property type="taxonomic scope" value="Bacteria"/>
</dbReference>
<dbReference type="HOGENOM" id="CLU_053306_1_0_5"/>
<dbReference type="UniPathway" id="UPA00034">
    <property type="reaction ID" value="UER00025"/>
</dbReference>
<dbReference type="Proteomes" id="UP000007056">
    <property type="component" value="Chromosome"/>
</dbReference>
<dbReference type="GO" id="GO:0005829">
    <property type="term" value="C:cytosol"/>
    <property type="evidence" value="ECO:0007669"/>
    <property type="project" value="TreeGrafter"/>
</dbReference>
<dbReference type="GO" id="GO:0008837">
    <property type="term" value="F:diaminopimelate epimerase activity"/>
    <property type="evidence" value="ECO:0007669"/>
    <property type="project" value="UniProtKB-UniRule"/>
</dbReference>
<dbReference type="GO" id="GO:0009089">
    <property type="term" value="P:lysine biosynthetic process via diaminopimelate"/>
    <property type="evidence" value="ECO:0007669"/>
    <property type="project" value="UniProtKB-UniRule"/>
</dbReference>
<dbReference type="Gene3D" id="3.10.310.10">
    <property type="entry name" value="Diaminopimelate Epimerase, Chain A, domain 1"/>
    <property type="match status" value="2"/>
</dbReference>
<dbReference type="HAMAP" id="MF_00197">
    <property type="entry name" value="DAP_epimerase"/>
    <property type="match status" value="1"/>
</dbReference>
<dbReference type="InterPro" id="IPR018510">
    <property type="entry name" value="DAP_epimerase_AS"/>
</dbReference>
<dbReference type="InterPro" id="IPR001653">
    <property type="entry name" value="DAP_epimerase_DapF"/>
</dbReference>
<dbReference type="NCBIfam" id="TIGR00652">
    <property type="entry name" value="DapF"/>
    <property type="match status" value="1"/>
</dbReference>
<dbReference type="PANTHER" id="PTHR31689:SF0">
    <property type="entry name" value="DIAMINOPIMELATE EPIMERASE"/>
    <property type="match status" value="1"/>
</dbReference>
<dbReference type="PANTHER" id="PTHR31689">
    <property type="entry name" value="DIAMINOPIMELATE EPIMERASE, CHLOROPLASTIC"/>
    <property type="match status" value="1"/>
</dbReference>
<dbReference type="Pfam" id="PF01678">
    <property type="entry name" value="DAP_epimerase"/>
    <property type="match status" value="2"/>
</dbReference>
<dbReference type="SUPFAM" id="SSF54506">
    <property type="entry name" value="Diaminopimelate epimerase-like"/>
    <property type="match status" value="2"/>
</dbReference>
<dbReference type="PROSITE" id="PS01326">
    <property type="entry name" value="DAP_EPIMERASE"/>
    <property type="match status" value="1"/>
</dbReference>
<accession>A8EZ08</accession>